<accession>B2JD88</accession>
<proteinExistence type="inferred from homology"/>
<comment type="function">
    <text evidence="1">Catalyzes the methylthiolation of N6-(dimethylallyl)adenosine (i(6)A), leading to the formation of 2-methylthio-N6-(dimethylallyl)adenosine (ms(2)i(6)A) at position 37 in tRNAs that read codons beginning with uridine.</text>
</comment>
<comment type="catalytic activity">
    <reaction evidence="1">
        <text>N(6)-dimethylallyladenosine(37) in tRNA + (sulfur carrier)-SH + AH2 + 2 S-adenosyl-L-methionine = 2-methylsulfanyl-N(6)-dimethylallyladenosine(37) in tRNA + (sulfur carrier)-H + 5'-deoxyadenosine + L-methionine + A + S-adenosyl-L-homocysteine + 2 H(+)</text>
        <dbReference type="Rhea" id="RHEA:37067"/>
        <dbReference type="Rhea" id="RHEA-COMP:10375"/>
        <dbReference type="Rhea" id="RHEA-COMP:10376"/>
        <dbReference type="Rhea" id="RHEA-COMP:14737"/>
        <dbReference type="Rhea" id="RHEA-COMP:14739"/>
        <dbReference type="ChEBI" id="CHEBI:13193"/>
        <dbReference type="ChEBI" id="CHEBI:15378"/>
        <dbReference type="ChEBI" id="CHEBI:17319"/>
        <dbReference type="ChEBI" id="CHEBI:17499"/>
        <dbReference type="ChEBI" id="CHEBI:29917"/>
        <dbReference type="ChEBI" id="CHEBI:57844"/>
        <dbReference type="ChEBI" id="CHEBI:57856"/>
        <dbReference type="ChEBI" id="CHEBI:59789"/>
        <dbReference type="ChEBI" id="CHEBI:64428"/>
        <dbReference type="ChEBI" id="CHEBI:74415"/>
        <dbReference type="ChEBI" id="CHEBI:74417"/>
        <dbReference type="EC" id="2.8.4.3"/>
    </reaction>
</comment>
<comment type="cofactor">
    <cofactor evidence="1">
        <name>[4Fe-4S] cluster</name>
        <dbReference type="ChEBI" id="CHEBI:49883"/>
    </cofactor>
    <text evidence="1">Binds 2 [4Fe-4S] clusters. One cluster is coordinated with 3 cysteines and an exchangeable S-adenosyl-L-methionine.</text>
</comment>
<comment type="subunit">
    <text evidence="1">Monomer.</text>
</comment>
<comment type="subcellular location">
    <subcellularLocation>
        <location evidence="1">Cytoplasm</location>
    </subcellularLocation>
</comment>
<comment type="similarity">
    <text evidence="1">Belongs to the methylthiotransferase family. MiaB subfamily.</text>
</comment>
<evidence type="ECO:0000255" key="1">
    <source>
        <dbReference type="HAMAP-Rule" id="MF_01864"/>
    </source>
</evidence>
<evidence type="ECO:0000255" key="2">
    <source>
        <dbReference type="PROSITE-ProRule" id="PRU01266"/>
    </source>
</evidence>
<feature type="chain" id="PRO_0000374183" description="tRNA-2-methylthio-N(6)-dimethylallyladenosine synthase">
    <location>
        <begin position="1"/>
        <end position="456"/>
    </location>
</feature>
<feature type="domain" description="MTTase N-terminal" evidence="1">
    <location>
        <begin position="3"/>
        <end position="120"/>
    </location>
</feature>
<feature type="domain" description="Radical SAM core" evidence="2">
    <location>
        <begin position="143"/>
        <end position="377"/>
    </location>
</feature>
<feature type="domain" description="TRAM" evidence="1">
    <location>
        <begin position="380"/>
        <end position="447"/>
    </location>
</feature>
<feature type="binding site" evidence="1">
    <location>
        <position position="12"/>
    </location>
    <ligand>
        <name>[4Fe-4S] cluster</name>
        <dbReference type="ChEBI" id="CHEBI:49883"/>
        <label>1</label>
    </ligand>
</feature>
<feature type="binding site" evidence="1">
    <location>
        <position position="49"/>
    </location>
    <ligand>
        <name>[4Fe-4S] cluster</name>
        <dbReference type="ChEBI" id="CHEBI:49883"/>
        <label>1</label>
    </ligand>
</feature>
<feature type="binding site" evidence="1">
    <location>
        <position position="83"/>
    </location>
    <ligand>
        <name>[4Fe-4S] cluster</name>
        <dbReference type="ChEBI" id="CHEBI:49883"/>
        <label>1</label>
    </ligand>
</feature>
<feature type="binding site" evidence="1">
    <location>
        <position position="157"/>
    </location>
    <ligand>
        <name>[4Fe-4S] cluster</name>
        <dbReference type="ChEBI" id="CHEBI:49883"/>
        <label>2</label>
        <note>4Fe-4S-S-AdoMet</note>
    </ligand>
</feature>
<feature type="binding site" evidence="1">
    <location>
        <position position="161"/>
    </location>
    <ligand>
        <name>[4Fe-4S] cluster</name>
        <dbReference type="ChEBI" id="CHEBI:49883"/>
        <label>2</label>
        <note>4Fe-4S-S-AdoMet</note>
    </ligand>
</feature>
<feature type="binding site" evidence="1">
    <location>
        <position position="164"/>
    </location>
    <ligand>
        <name>[4Fe-4S] cluster</name>
        <dbReference type="ChEBI" id="CHEBI:49883"/>
        <label>2</label>
        <note>4Fe-4S-S-AdoMet</note>
    </ligand>
</feature>
<name>MIAB_PARP8</name>
<keyword id="KW-0004">4Fe-4S</keyword>
<keyword id="KW-0963">Cytoplasm</keyword>
<keyword id="KW-0408">Iron</keyword>
<keyword id="KW-0411">Iron-sulfur</keyword>
<keyword id="KW-0479">Metal-binding</keyword>
<keyword id="KW-1185">Reference proteome</keyword>
<keyword id="KW-0949">S-adenosyl-L-methionine</keyword>
<keyword id="KW-0808">Transferase</keyword>
<keyword id="KW-0819">tRNA processing</keyword>
<organism>
    <name type="scientific">Paraburkholderia phymatum (strain DSM 17167 / CIP 108236 / LMG 21445 / STM815)</name>
    <name type="common">Burkholderia phymatum</name>
    <dbReference type="NCBI Taxonomy" id="391038"/>
    <lineage>
        <taxon>Bacteria</taxon>
        <taxon>Pseudomonadati</taxon>
        <taxon>Pseudomonadota</taxon>
        <taxon>Betaproteobacteria</taxon>
        <taxon>Burkholderiales</taxon>
        <taxon>Burkholderiaceae</taxon>
        <taxon>Paraburkholderia</taxon>
    </lineage>
</organism>
<gene>
    <name evidence="1" type="primary">miaB</name>
    <name type="ordered locus">Bphy_0412</name>
</gene>
<protein>
    <recommendedName>
        <fullName evidence="1">tRNA-2-methylthio-N(6)-dimethylallyladenosine synthase</fullName>
        <ecNumber evidence="1">2.8.4.3</ecNumber>
    </recommendedName>
    <alternativeName>
        <fullName evidence="1">(Dimethylallyl)adenosine tRNA methylthiotransferase MiaB</fullName>
    </alternativeName>
    <alternativeName>
        <fullName evidence="1">tRNA-i(6)A37 methylthiotransferase</fullName>
    </alternativeName>
</protein>
<reference key="1">
    <citation type="journal article" date="2014" name="Stand. Genomic Sci.">
        <title>Complete genome sequence of Burkholderia phymatum STM815(T), a broad host range and efficient nitrogen-fixing symbiont of Mimosa species.</title>
        <authorList>
            <person name="Moulin L."/>
            <person name="Klonowska A."/>
            <person name="Caroline B."/>
            <person name="Booth K."/>
            <person name="Vriezen J.A."/>
            <person name="Melkonian R."/>
            <person name="James E.K."/>
            <person name="Young J.P."/>
            <person name="Bena G."/>
            <person name="Hauser L."/>
            <person name="Land M."/>
            <person name="Kyrpides N."/>
            <person name="Bruce D."/>
            <person name="Chain P."/>
            <person name="Copeland A."/>
            <person name="Pitluck S."/>
            <person name="Woyke T."/>
            <person name="Lizotte-Waniewski M."/>
            <person name="Bristow J."/>
            <person name="Riley M."/>
        </authorList>
    </citation>
    <scope>NUCLEOTIDE SEQUENCE [LARGE SCALE GENOMIC DNA]</scope>
    <source>
        <strain>DSM 17167 / CIP 108236 / LMG 21445 / STM815</strain>
    </source>
</reference>
<dbReference type="EC" id="2.8.4.3" evidence="1"/>
<dbReference type="EMBL" id="CP001043">
    <property type="protein sequence ID" value="ACC69605.1"/>
    <property type="molecule type" value="Genomic_DNA"/>
</dbReference>
<dbReference type="RefSeq" id="WP_012399831.1">
    <property type="nucleotide sequence ID" value="NC_010622.1"/>
</dbReference>
<dbReference type="SMR" id="B2JD88"/>
<dbReference type="STRING" id="391038.Bphy_0412"/>
<dbReference type="KEGG" id="bph:Bphy_0412"/>
<dbReference type="eggNOG" id="COG0621">
    <property type="taxonomic scope" value="Bacteria"/>
</dbReference>
<dbReference type="HOGENOM" id="CLU_018697_2_0_4"/>
<dbReference type="OrthoDB" id="9805215at2"/>
<dbReference type="Proteomes" id="UP000001192">
    <property type="component" value="Chromosome 1"/>
</dbReference>
<dbReference type="GO" id="GO:0005829">
    <property type="term" value="C:cytosol"/>
    <property type="evidence" value="ECO:0007669"/>
    <property type="project" value="TreeGrafter"/>
</dbReference>
<dbReference type="GO" id="GO:0051539">
    <property type="term" value="F:4 iron, 4 sulfur cluster binding"/>
    <property type="evidence" value="ECO:0007669"/>
    <property type="project" value="UniProtKB-UniRule"/>
</dbReference>
<dbReference type="GO" id="GO:0046872">
    <property type="term" value="F:metal ion binding"/>
    <property type="evidence" value="ECO:0007669"/>
    <property type="project" value="UniProtKB-KW"/>
</dbReference>
<dbReference type="GO" id="GO:0035597">
    <property type="term" value="F:N6-isopentenyladenosine methylthiotransferase activity"/>
    <property type="evidence" value="ECO:0007669"/>
    <property type="project" value="TreeGrafter"/>
</dbReference>
<dbReference type="CDD" id="cd01335">
    <property type="entry name" value="Radical_SAM"/>
    <property type="match status" value="1"/>
</dbReference>
<dbReference type="FunFam" id="3.40.50.12160:FF:000001">
    <property type="entry name" value="tRNA-2-methylthio-N(6)-dimethylallyladenosine synthase"/>
    <property type="match status" value="1"/>
</dbReference>
<dbReference type="FunFam" id="3.80.30.20:FF:000001">
    <property type="entry name" value="tRNA-2-methylthio-N(6)-dimethylallyladenosine synthase 2"/>
    <property type="match status" value="1"/>
</dbReference>
<dbReference type="Gene3D" id="3.40.50.12160">
    <property type="entry name" value="Methylthiotransferase, N-terminal domain"/>
    <property type="match status" value="1"/>
</dbReference>
<dbReference type="Gene3D" id="3.80.30.20">
    <property type="entry name" value="tm_1862 like domain"/>
    <property type="match status" value="1"/>
</dbReference>
<dbReference type="HAMAP" id="MF_01864">
    <property type="entry name" value="tRNA_metthiotr_MiaB"/>
    <property type="match status" value="1"/>
</dbReference>
<dbReference type="InterPro" id="IPR006638">
    <property type="entry name" value="Elp3/MiaA/NifB-like_rSAM"/>
</dbReference>
<dbReference type="InterPro" id="IPR005839">
    <property type="entry name" value="Methylthiotransferase"/>
</dbReference>
<dbReference type="InterPro" id="IPR020612">
    <property type="entry name" value="Methylthiotransferase_CS"/>
</dbReference>
<dbReference type="InterPro" id="IPR013848">
    <property type="entry name" value="Methylthiotransferase_N"/>
</dbReference>
<dbReference type="InterPro" id="IPR038135">
    <property type="entry name" value="Methylthiotransferase_N_sf"/>
</dbReference>
<dbReference type="InterPro" id="IPR006463">
    <property type="entry name" value="MiaB_methiolase"/>
</dbReference>
<dbReference type="InterPro" id="IPR007197">
    <property type="entry name" value="rSAM"/>
</dbReference>
<dbReference type="InterPro" id="IPR023404">
    <property type="entry name" value="rSAM_horseshoe"/>
</dbReference>
<dbReference type="InterPro" id="IPR002792">
    <property type="entry name" value="TRAM_dom"/>
</dbReference>
<dbReference type="NCBIfam" id="TIGR01574">
    <property type="entry name" value="miaB-methiolase"/>
    <property type="match status" value="1"/>
</dbReference>
<dbReference type="NCBIfam" id="TIGR00089">
    <property type="entry name" value="MiaB/RimO family radical SAM methylthiotransferase"/>
    <property type="match status" value="1"/>
</dbReference>
<dbReference type="PANTHER" id="PTHR43020">
    <property type="entry name" value="CDK5 REGULATORY SUBUNIT-ASSOCIATED PROTEIN 1"/>
    <property type="match status" value="1"/>
</dbReference>
<dbReference type="PANTHER" id="PTHR43020:SF2">
    <property type="entry name" value="MITOCHONDRIAL TRNA METHYLTHIOTRANSFERASE CDK5RAP1"/>
    <property type="match status" value="1"/>
</dbReference>
<dbReference type="Pfam" id="PF04055">
    <property type="entry name" value="Radical_SAM"/>
    <property type="match status" value="1"/>
</dbReference>
<dbReference type="Pfam" id="PF01938">
    <property type="entry name" value="TRAM"/>
    <property type="match status" value="1"/>
</dbReference>
<dbReference type="Pfam" id="PF00919">
    <property type="entry name" value="UPF0004"/>
    <property type="match status" value="1"/>
</dbReference>
<dbReference type="SFLD" id="SFLDF00273">
    <property type="entry name" value="(dimethylallyl)adenosine_tRNA"/>
    <property type="match status" value="1"/>
</dbReference>
<dbReference type="SFLD" id="SFLDG01082">
    <property type="entry name" value="B12-binding_domain_containing"/>
    <property type="match status" value="1"/>
</dbReference>
<dbReference type="SFLD" id="SFLDS00029">
    <property type="entry name" value="Radical_SAM"/>
    <property type="match status" value="1"/>
</dbReference>
<dbReference type="SMART" id="SM00729">
    <property type="entry name" value="Elp3"/>
    <property type="match status" value="1"/>
</dbReference>
<dbReference type="SUPFAM" id="SSF102114">
    <property type="entry name" value="Radical SAM enzymes"/>
    <property type="match status" value="1"/>
</dbReference>
<dbReference type="PROSITE" id="PS51449">
    <property type="entry name" value="MTTASE_N"/>
    <property type="match status" value="1"/>
</dbReference>
<dbReference type="PROSITE" id="PS01278">
    <property type="entry name" value="MTTASE_RADICAL"/>
    <property type="match status" value="1"/>
</dbReference>
<dbReference type="PROSITE" id="PS51918">
    <property type="entry name" value="RADICAL_SAM"/>
    <property type="match status" value="1"/>
</dbReference>
<dbReference type="PROSITE" id="PS50926">
    <property type="entry name" value="TRAM"/>
    <property type="match status" value="1"/>
</dbReference>
<sequence>MTKKVYVKTFGCQMNEYDSDKMVDVLGAAEGLVKTDTPEDADVILFNTCSVREKAQEKVFSDLGRVRELKEANPNLLIGVGGCVASQEGASIVARAPYVDLVFGPQTLHRLPQMIDQRRASGRPQVDITFPEIEKFDHLPPARIDGPSAFVSIMEGCSKYCSYCVVPYTRGEEVSRPLDDVLTEIAGLADQGVREVTLLGQNVNAYRGAMTLGATEIADFATLIEYVADIPGIERIRYTTSHPKEFTQRLIDTYAKVPKLVSHLHLPVQHGSDRILMAMKRGYTVLEYKSVIRKLRAIRPDLSLSTDMIVGFPGETEEDFDKMMQLVHDMSYDTSFSFIYSPRPGTPAANLQDDTPREVKLRRLQHLQATIEENVQRISQAMVGKVERILVERPARKDPNELAGRTENNRVVNFPAPVETHARLIGQMIDVKIVHAYPHSLRGELVMVHDTAPATH</sequence>